<name>Y1434_ARCFU</name>
<dbReference type="EMBL" id="AE000782">
    <property type="protein sequence ID" value="AAB89818.1"/>
    <property type="molecule type" value="Genomic_DNA"/>
</dbReference>
<dbReference type="PIR" id="A69429">
    <property type="entry name" value="A69429"/>
</dbReference>
<dbReference type="RefSeq" id="WP_010878931.1">
    <property type="nucleotide sequence ID" value="NC_000917.1"/>
</dbReference>
<dbReference type="SMR" id="O28838"/>
<dbReference type="STRING" id="224325.AF_1434"/>
<dbReference type="PaxDb" id="224325-AF_1434"/>
<dbReference type="DNASU" id="1484658"/>
<dbReference type="EnsemblBacteria" id="AAB89818">
    <property type="protein sequence ID" value="AAB89818"/>
    <property type="gene ID" value="AF_1434"/>
</dbReference>
<dbReference type="GeneID" id="1484658"/>
<dbReference type="KEGG" id="afu:AF_1434"/>
<dbReference type="HOGENOM" id="CLU_1369451_0_0_2"/>
<dbReference type="Proteomes" id="UP000002199">
    <property type="component" value="Chromosome"/>
</dbReference>
<dbReference type="GO" id="GO:0005886">
    <property type="term" value="C:plasma membrane"/>
    <property type="evidence" value="ECO:0007669"/>
    <property type="project" value="UniProtKB-SubCell"/>
</dbReference>
<dbReference type="InterPro" id="IPR025256">
    <property type="entry name" value="TM7S3/TM198-like_dom"/>
</dbReference>
<dbReference type="Pfam" id="PF13886">
    <property type="entry name" value="TM7S3_TM198"/>
    <property type="match status" value="1"/>
</dbReference>
<evidence type="ECO:0000255" key="1"/>
<evidence type="ECO:0000305" key="2"/>
<proteinExistence type="predicted"/>
<protein>
    <recommendedName>
        <fullName>Uncharacterized protein AF_1434</fullName>
    </recommendedName>
</protein>
<gene>
    <name type="ordered locus">AF_1434</name>
</gene>
<reference key="1">
    <citation type="journal article" date="1997" name="Nature">
        <title>The complete genome sequence of the hyperthermophilic, sulphate-reducing archaeon Archaeoglobus fulgidus.</title>
        <authorList>
            <person name="Klenk H.-P."/>
            <person name="Clayton R.A."/>
            <person name="Tomb J.-F."/>
            <person name="White O."/>
            <person name="Nelson K.E."/>
            <person name="Ketchum K.A."/>
            <person name="Dodson R.J."/>
            <person name="Gwinn M.L."/>
            <person name="Hickey E.K."/>
            <person name="Peterson J.D."/>
            <person name="Richardson D.L."/>
            <person name="Kerlavage A.R."/>
            <person name="Graham D.E."/>
            <person name="Kyrpides N.C."/>
            <person name="Fleischmann R.D."/>
            <person name="Quackenbush J."/>
            <person name="Lee N.H."/>
            <person name="Sutton G.G."/>
            <person name="Gill S.R."/>
            <person name="Kirkness E.F."/>
            <person name="Dougherty B.A."/>
            <person name="McKenney K."/>
            <person name="Adams M.D."/>
            <person name="Loftus B.J."/>
            <person name="Peterson S.N."/>
            <person name="Reich C.I."/>
            <person name="McNeil L.K."/>
            <person name="Badger J.H."/>
            <person name="Glodek A."/>
            <person name="Zhou L."/>
            <person name="Overbeek R."/>
            <person name="Gocayne J.D."/>
            <person name="Weidman J.F."/>
            <person name="McDonald L.A."/>
            <person name="Utterback T.R."/>
            <person name="Cotton M.D."/>
            <person name="Spriggs T."/>
            <person name="Artiach P."/>
            <person name="Kaine B.P."/>
            <person name="Sykes S.M."/>
            <person name="Sadow P.W."/>
            <person name="D'Andrea K.P."/>
            <person name="Bowman C."/>
            <person name="Fujii C."/>
            <person name="Garland S.A."/>
            <person name="Mason T.M."/>
            <person name="Olsen G.J."/>
            <person name="Fraser C.M."/>
            <person name="Smith H.O."/>
            <person name="Woese C.R."/>
            <person name="Venter J.C."/>
        </authorList>
    </citation>
    <scope>NUCLEOTIDE SEQUENCE [LARGE SCALE GENOMIC DNA]</scope>
    <source>
        <strain>ATCC 49558 / DSM 4304 / JCM 9628 / NBRC 100126 / VC-16</strain>
    </source>
</reference>
<keyword id="KW-1003">Cell membrane</keyword>
<keyword id="KW-0472">Membrane</keyword>
<keyword id="KW-1185">Reference proteome</keyword>
<keyword id="KW-0812">Transmembrane</keyword>
<keyword id="KW-1133">Transmembrane helix</keyword>
<sequence>MQPIELAELLTSQAAVLTSLVVIGLILCFIGYKIFRVYSAVIGLFIGQLVGIYITINYYENALIVILASAIVGALLFALIDELGLIVTGAAFGYFVGVYLLPEYQVYAFVLAALFALINLFIEKPLTVLITSVIGASAIALAVHMGITGTHIYDILNDPKKVFDAIFSNAYFDLLWFTLVLTGIITQYVTYKEEREEEE</sequence>
<organism>
    <name type="scientific">Archaeoglobus fulgidus (strain ATCC 49558 / DSM 4304 / JCM 9628 / NBRC 100126 / VC-16)</name>
    <dbReference type="NCBI Taxonomy" id="224325"/>
    <lineage>
        <taxon>Archaea</taxon>
        <taxon>Methanobacteriati</taxon>
        <taxon>Methanobacteriota</taxon>
        <taxon>Archaeoglobi</taxon>
        <taxon>Archaeoglobales</taxon>
        <taxon>Archaeoglobaceae</taxon>
        <taxon>Archaeoglobus</taxon>
    </lineage>
</organism>
<feature type="chain" id="PRO_0000127999" description="Uncharacterized protein AF_1434">
    <location>
        <begin position="1"/>
        <end position="199"/>
    </location>
</feature>
<feature type="transmembrane region" description="Helical" evidence="1">
    <location>
        <begin position="10"/>
        <end position="32"/>
    </location>
</feature>
<feature type="transmembrane region" description="Helical" evidence="1">
    <location>
        <begin position="37"/>
        <end position="59"/>
    </location>
</feature>
<feature type="transmembrane region" description="Helical" evidence="1">
    <location>
        <begin position="63"/>
        <end position="80"/>
    </location>
</feature>
<feature type="transmembrane region" description="Helical" evidence="1">
    <location>
        <begin position="83"/>
        <end position="100"/>
    </location>
</feature>
<feature type="transmembrane region" description="Helical" evidence="1">
    <location>
        <begin position="104"/>
        <end position="121"/>
    </location>
</feature>
<feature type="transmembrane region" description="Helical" evidence="1">
    <location>
        <begin position="126"/>
        <end position="148"/>
    </location>
</feature>
<feature type="transmembrane region" description="Helical" evidence="1">
    <location>
        <begin position="163"/>
        <end position="185"/>
    </location>
</feature>
<accession>O28838</accession>
<comment type="subcellular location">
    <subcellularLocation>
        <location evidence="2">Cell membrane</location>
        <topology evidence="2">Multi-pass membrane protein</topology>
    </subcellularLocation>
</comment>